<comment type="function">
    <text evidence="1">An essential GTPase which binds GTP, GDP and possibly (p)ppGpp with moderate affinity, with high nucleotide exchange rates and a fairly low GTP hydrolysis rate. Plays a role in control of the cell cycle, stress response, ribosome biogenesis and in those bacteria that undergo differentiation, in morphogenesis control.</text>
</comment>
<comment type="cofactor">
    <cofactor evidence="1">
        <name>Mg(2+)</name>
        <dbReference type="ChEBI" id="CHEBI:18420"/>
    </cofactor>
</comment>
<comment type="subunit">
    <text evidence="1">Monomer.</text>
</comment>
<comment type="subcellular location">
    <subcellularLocation>
        <location evidence="1">Cytoplasm</location>
    </subcellularLocation>
</comment>
<comment type="similarity">
    <text evidence="1">Belongs to the TRAFAC class OBG-HflX-like GTPase superfamily. OBG GTPase family.</text>
</comment>
<comment type="sequence caution" evidence="4">
    <conflict type="erroneous initiation">
        <sequence resource="EMBL-CDS" id="AAU28707"/>
    </conflict>
    <text>Extended N-terminus.</text>
</comment>
<feature type="chain" id="PRO_0000386011" description="GTPase Obg">
    <location>
        <begin position="1"/>
        <end position="341"/>
    </location>
</feature>
<feature type="domain" description="Obg" evidence="2">
    <location>
        <begin position="1"/>
        <end position="159"/>
    </location>
</feature>
<feature type="domain" description="OBG-type G" evidence="1">
    <location>
        <begin position="160"/>
        <end position="334"/>
    </location>
</feature>
<feature type="region of interest" description="Disordered" evidence="3">
    <location>
        <begin position="128"/>
        <end position="150"/>
    </location>
</feature>
<feature type="compositionally biased region" description="Polar residues" evidence="3">
    <location>
        <begin position="129"/>
        <end position="144"/>
    </location>
</feature>
<feature type="binding site" evidence="1">
    <location>
        <begin position="166"/>
        <end position="173"/>
    </location>
    <ligand>
        <name>GTP</name>
        <dbReference type="ChEBI" id="CHEBI:37565"/>
    </ligand>
</feature>
<feature type="binding site" evidence="1">
    <location>
        <position position="173"/>
    </location>
    <ligand>
        <name>Mg(2+)</name>
        <dbReference type="ChEBI" id="CHEBI:18420"/>
    </ligand>
</feature>
<feature type="binding site" evidence="1">
    <location>
        <begin position="191"/>
        <end position="195"/>
    </location>
    <ligand>
        <name>GTP</name>
        <dbReference type="ChEBI" id="CHEBI:37565"/>
    </ligand>
</feature>
<feature type="binding site" evidence="1">
    <location>
        <position position="193"/>
    </location>
    <ligand>
        <name>Mg(2+)</name>
        <dbReference type="ChEBI" id="CHEBI:18420"/>
    </ligand>
</feature>
<feature type="binding site" evidence="1">
    <location>
        <begin position="213"/>
        <end position="216"/>
    </location>
    <ligand>
        <name>GTP</name>
        <dbReference type="ChEBI" id="CHEBI:37565"/>
    </ligand>
</feature>
<feature type="binding site" evidence="1">
    <location>
        <begin position="283"/>
        <end position="286"/>
    </location>
    <ligand>
        <name>GTP</name>
        <dbReference type="ChEBI" id="CHEBI:37565"/>
    </ligand>
</feature>
<feature type="binding site" evidence="1">
    <location>
        <begin position="315"/>
        <end position="317"/>
    </location>
    <ligand>
        <name>GTP</name>
        <dbReference type="ChEBI" id="CHEBI:37565"/>
    </ligand>
</feature>
<sequence>MKFVDEALIKVEAGKGGNGCLSFRREKFIPRGGPDGGDGGDGGSIYFEASSDLNTLIDFRYTRQYKAENGQSGMGGNCTGKKGDDLTIKVPVGTMVYDADTGELLADISQPGIPVLIAQGGFHGLGNTRYKSSVNRSPRQTTPGSPGESRNLRLELRVLADVGLLGLPNAGKSTLIRAVSSSKAKVADYPFTTLHPGLGVVRVSPYKSFVMADIPGLIEGAAQGAGLGHRFLKHLSRTCVLLHVIDIAPLDGSDPVADAKAILNELTQYNPDLLNKPRWLVLNKIDMLPDEKEREEKIQSIIKGLEWKDKVFSISAIESKGTQELCYALMQLIDEMKESEA</sequence>
<dbReference type="EC" id="3.6.5.-" evidence="1"/>
<dbReference type="EMBL" id="AE017354">
    <property type="protein sequence ID" value="AAU28707.1"/>
    <property type="status" value="ALT_INIT"/>
    <property type="molecule type" value="Genomic_DNA"/>
</dbReference>
<dbReference type="RefSeq" id="YP_096654.2">
    <property type="nucleotide sequence ID" value="NC_002942.5"/>
</dbReference>
<dbReference type="SMR" id="Q5ZS70"/>
<dbReference type="STRING" id="272624.lpg2649"/>
<dbReference type="PaxDb" id="272624-lpg2649"/>
<dbReference type="KEGG" id="lpn:lpg2649"/>
<dbReference type="PATRIC" id="fig|272624.6.peg.2827"/>
<dbReference type="eggNOG" id="COG0536">
    <property type="taxonomic scope" value="Bacteria"/>
</dbReference>
<dbReference type="HOGENOM" id="CLU_011747_2_0_6"/>
<dbReference type="OrthoDB" id="9807318at2"/>
<dbReference type="Proteomes" id="UP000000609">
    <property type="component" value="Chromosome"/>
</dbReference>
<dbReference type="GO" id="GO:0005737">
    <property type="term" value="C:cytoplasm"/>
    <property type="evidence" value="ECO:0007669"/>
    <property type="project" value="UniProtKB-SubCell"/>
</dbReference>
<dbReference type="GO" id="GO:0005525">
    <property type="term" value="F:GTP binding"/>
    <property type="evidence" value="ECO:0007669"/>
    <property type="project" value="UniProtKB-UniRule"/>
</dbReference>
<dbReference type="GO" id="GO:0003924">
    <property type="term" value="F:GTPase activity"/>
    <property type="evidence" value="ECO:0007669"/>
    <property type="project" value="UniProtKB-UniRule"/>
</dbReference>
<dbReference type="GO" id="GO:0000287">
    <property type="term" value="F:magnesium ion binding"/>
    <property type="evidence" value="ECO:0007669"/>
    <property type="project" value="InterPro"/>
</dbReference>
<dbReference type="GO" id="GO:0042254">
    <property type="term" value="P:ribosome biogenesis"/>
    <property type="evidence" value="ECO:0007669"/>
    <property type="project" value="UniProtKB-UniRule"/>
</dbReference>
<dbReference type="CDD" id="cd01898">
    <property type="entry name" value="Obg"/>
    <property type="match status" value="1"/>
</dbReference>
<dbReference type="FunFam" id="2.70.210.12:FF:000001">
    <property type="entry name" value="GTPase Obg"/>
    <property type="match status" value="1"/>
</dbReference>
<dbReference type="Gene3D" id="2.70.210.12">
    <property type="entry name" value="GTP1/OBG domain"/>
    <property type="match status" value="1"/>
</dbReference>
<dbReference type="Gene3D" id="3.40.50.300">
    <property type="entry name" value="P-loop containing nucleotide triphosphate hydrolases"/>
    <property type="match status" value="1"/>
</dbReference>
<dbReference type="HAMAP" id="MF_01454">
    <property type="entry name" value="GTPase_Obg"/>
    <property type="match status" value="1"/>
</dbReference>
<dbReference type="InterPro" id="IPR031167">
    <property type="entry name" value="G_OBG"/>
</dbReference>
<dbReference type="InterPro" id="IPR006073">
    <property type="entry name" value="GTP-bd"/>
</dbReference>
<dbReference type="InterPro" id="IPR014100">
    <property type="entry name" value="GTP-bd_Obg/CgtA"/>
</dbReference>
<dbReference type="InterPro" id="IPR006074">
    <property type="entry name" value="GTP1-OBG_CS"/>
</dbReference>
<dbReference type="InterPro" id="IPR006169">
    <property type="entry name" value="GTP1_OBG_dom"/>
</dbReference>
<dbReference type="InterPro" id="IPR036726">
    <property type="entry name" value="GTP1_OBG_dom_sf"/>
</dbReference>
<dbReference type="InterPro" id="IPR045086">
    <property type="entry name" value="OBG_GTPase"/>
</dbReference>
<dbReference type="InterPro" id="IPR027417">
    <property type="entry name" value="P-loop_NTPase"/>
</dbReference>
<dbReference type="InterPro" id="IPR005225">
    <property type="entry name" value="Small_GTP-bd"/>
</dbReference>
<dbReference type="NCBIfam" id="TIGR02729">
    <property type="entry name" value="Obg_CgtA"/>
    <property type="match status" value="1"/>
</dbReference>
<dbReference type="NCBIfam" id="NF008955">
    <property type="entry name" value="PRK12297.1"/>
    <property type="match status" value="1"/>
</dbReference>
<dbReference type="NCBIfam" id="NF008956">
    <property type="entry name" value="PRK12299.1"/>
    <property type="match status" value="1"/>
</dbReference>
<dbReference type="NCBIfam" id="TIGR00231">
    <property type="entry name" value="small_GTP"/>
    <property type="match status" value="1"/>
</dbReference>
<dbReference type="PANTHER" id="PTHR11702">
    <property type="entry name" value="DEVELOPMENTALLY REGULATED GTP-BINDING PROTEIN-RELATED"/>
    <property type="match status" value="1"/>
</dbReference>
<dbReference type="PANTHER" id="PTHR11702:SF31">
    <property type="entry name" value="MITOCHONDRIAL RIBOSOME-ASSOCIATED GTPASE 2"/>
    <property type="match status" value="1"/>
</dbReference>
<dbReference type="Pfam" id="PF01018">
    <property type="entry name" value="GTP1_OBG"/>
    <property type="match status" value="1"/>
</dbReference>
<dbReference type="Pfam" id="PF01926">
    <property type="entry name" value="MMR_HSR1"/>
    <property type="match status" value="1"/>
</dbReference>
<dbReference type="PIRSF" id="PIRSF002401">
    <property type="entry name" value="GTP_bd_Obg/CgtA"/>
    <property type="match status" value="1"/>
</dbReference>
<dbReference type="PRINTS" id="PR00326">
    <property type="entry name" value="GTP1OBG"/>
</dbReference>
<dbReference type="SUPFAM" id="SSF82051">
    <property type="entry name" value="Obg GTP-binding protein N-terminal domain"/>
    <property type="match status" value="1"/>
</dbReference>
<dbReference type="SUPFAM" id="SSF52540">
    <property type="entry name" value="P-loop containing nucleoside triphosphate hydrolases"/>
    <property type="match status" value="1"/>
</dbReference>
<dbReference type="PROSITE" id="PS51710">
    <property type="entry name" value="G_OBG"/>
    <property type="match status" value="1"/>
</dbReference>
<dbReference type="PROSITE" id="PS00905">
    <property type="entry name" value="GTP1_OBG"/>
    <property type="match status" value="1"/>
</dbReference>
<dbReference type="PROSITE" id="PS51883">
    <property type="entry name" value="OBG"/>
    <property type="match status" value="1"/>
</dbReference>
<reference key="1">
    <citation type="journal article" date="2004" name="Science">
        <title>The genomic sequence of the accidental pathogen Legionella pneumophila.</title>
        <authorList>
            <person name="Chien M."/>
            <person name="Morozova I."/>
            <person name="Shi S."/>
            <person name="Sheng H."/>
            <person name="Chen J."/>
            <person name="Gomez S.M."/>
            <person name="Asamani G."/>
            <person name="Hill K."/>
            <person name="Nuara J."/>
            <person name="Feder M."/>
            <person name="Rineer J."/>
            <person name="Greenberg J.J."/>
            <person name="Steshenko V."/>
            <person name="Park S.H."/>
            <person name="Zhao B."/>
            <person name="Teplitskaya E."/>
            <person name="Edwards J.R."/>
            <person name="Pampou S."/>
            <person name="Georghiou A."/>
            <person name="Chou I.-C."/>
            <person name="Iannuccilli W."/>
            <person name="Ulz M.E."/>
            <person name="Kim D.H."/>
            <person name="Geringer-Sameth A."/>
            <person name="Goldsberry C."/>
            <person name="Morozov P."/>
            <person name="Fischer S.G."/>
            <person name="Segal G."/>
            <person name="Qu X."/>
            <person name="Rzhetsky A."/>
            <person name="Zhang P."/>
            <person name="Cayanis E."/>
            <person name="De Jong P.J."/>
            <person name="Ju J."/>
            <person name="Kalachikov S."/>
            <person name="Shuman H.A."/>
            <person name="Russo J.J."/>
        </authorList>
    </citation>
    <scope>NUCLEOTIDE SEQUENCE [LARGE SCALE GENOMIC DNA]</scope>
    <source>
        <strain>Philadelphia 1 / ATCC 33152 / DSM 7513</strain>
    </source>
</reference>
<gene>
    <name evidence="1" type="primary">obg</name>
    <name type="ordered locus">lpg2649</name>
</gene>
<protein>
    <recommendedName>
        <fullName evidence="1">GTPase Obg</fullName>
        <ecNumber evidence="1">3.6.5.-</ecNumber>
    </recommendedName>
    <alternativeName>
        <fullName evidence="1">GTP-binding protein Obg</fullName>
    </alternativeName>
</protein>
<name>OBG_LEGPH</name>
<proteinExistence type="inferred from homology"/>
<accession>Q5ZS70</accession>
<keyword id="KW-0963">Cytoplasm</keyword>
<keyword id="KW-0342">GTP-binding</keyword>
<keyword id="KW-0378">Hydrolase</keyword>
<keyword id="KW-0460">Magnesium</keyword>
<keyword id="KW-0479">Metal-binding</keyword>
<keyword id="KW-0547">Nucleotide-binding</keyword>
<keyword id="KW-1185">Reference proteome</keyword>
<evidence type="ECO:0000255" key="1">
    <source>
        <dbReference type="HAMAP-Rule" id="MF_01454"/>
    </source>
</evidence>
<evidence type="ECO:0000255" key="2">
    <source>
        <dbReference type="PROSITE-ProRule" id="PRU01231"/>
    </source>
</evidence>
<evidence type="ECO:0000256" key="3">
    <source>
        <dbReference type="SAM" id="MobiDB-lite"/>
    </source>
</evidence>
<evidence type="ECO:0000305" key="4"/>
<organism>
    <name type="scientific">Legionella pneumophila subsp. pneumophila (strain Philadelphia 1 / ATCC 33152 / DSM 7513)</name>
    <dbReference type="NCBI Taxonomy" id="272624"/>
    <lineage>
        <taxon>Bacteria</taxon>
        <taxon>Pseudomonadati</taxon>
        <taxon>Pseudomonadota</taxon>
        <taxon>Gammaproteobacteria</taxon>
        <taxon>Legionellales</taxon>
        <taxon>Legionellaceae</taxon>
        <taxon>Legionella</taxon>
    </lineage>
</organism>